<proteinExistence type="inferred from homology"/>
<evidence type="ECO:0000255" key="1">
    <source>
        <dbReference type="HAMAP-Rule" id="MF_00015"/>
    </source>
</evidence>
<name>LEXA_SALPA</name>
<comment type="function">
    <text evidence="1">Represses a number of genes involved in the response to DNA damage (SOS response), including recA and lexA. Binds to the 16 bp palindromic sequence 5'-CTGTATATATATACAG-3'. In the presence of single-stranded DNA, RecA interacts with LexA causing an autocatalytic cleavage which disrupts the DNA-binding part of LexA, leading to derepression of the SOS regulon and eventually DNA repair.</text>
</comment>
<comment type="catalytic activity">
    <reaction evidence="1">
        <text>Hydrolysis of Ala-|-Gly bond in repressor LexA.</text>
        <dbReference type="EC" id="3.4.21.88"/>
    </reaction>
</comment>
<comment type="subunit">
    <text evidence="1">Homodimer.</text>
</comment>
<comment type="similarity">
    <text evidence="1">Belongs to the peptidase S24 family.</text>
</comment>
<gene>
    <name evidence="1" type="primary">lexA</name>
    <name type="ordered locus">SPA4054</name>
</gene>
<dbReference type="EC" id="3.4.21.88" evidence="1"/>
<dbReference type="EMBL" id="CP000026">
    <property type="protein sequence ID" value="AAV79800.1"/>
    <property type="molecule type" value="Genomic_DNA"/>
</dbReference>
<dbReference type="RefSeq" id="WP_000646079.1">
    <property type="nucleotide sequence ID" value="NC_006511.1"/>
</dbReference>
<dbReference type="SMR" id="Q5PL14"/>
<dbReference type="MEROPS" id="S24.001"/>
<dbReference type="KEGG" id="spt:SPA4054"/>
<dbReference type="HOGENOM" id="CLU_066192_45_3_6"/>
<dbReference type="Proteomes" id="UP000008185">
    <property type="component" value="Chromosome"/>
</dbReference>
<dbReference type="GO" id="GO:0003677">
    <property type="term" value="F:DNA binding"/>
    <property type="evidence" value="ECO:0007669"/>
    <property type="project" value="UniProtKB-UniRule"/>
</dbReference>
<dbReference type="GO" id="GO:0004252">
    <property type="term" value="F:serine-type endopeptidase activity"/>
    <property type="evidence" value="ECO:0007669"/>
    <property type="project" value="UniProtKB-UniRule"/>
</dbReference>
<dbReference type="GO" id="GO:0006281">
    <property type="term" value="P:DNA repair"/>
    <property type="evidence" value="ECO:0007669"/>
    <property type="project" value="UniProtKB-UniRule"/>
</dbReference>
<dbReference type="GO" id="GO:0006260">
    <property type="term" value="P:DNA replication"/>
    <property type="evidence" value="ECO:0007669"/>
    <property type="project" value="UniProtKB-UniRule"/>
</dbReference>
<dbReference type="GO" id="GO:0045892">
    <property type="term" value="P:negative regulation of DNA-templated transcription"/>
    <property type="evidence" value="ECO:0007669"/>
    <property type="project" value="UniProtKB-UniRule"/>
</dbReference>
<dbReference type="GO" id="GO:0006508">
    <property type="term" value="P:proteolysis"/>
    <property type="evidence" value="ECO:0007669"/>
    <property type="project" value="InterPro"/>
</dbReference>
<dbReference type="GO" id="GO:0009432">
    <property type="term" value="P:SOS response"/>
    <property type="evidence" value="ECO:0007669"/>
    <property type="project" value="UniProtKB-UniRule"/>
</dbReference>
<dbReference type="CDD" id="cd06529">
    <property type="entry name" value="S24_LexA-like"/>
    <property type="match status" value="1"/>
</dbReference>
<dbReference type="FunFam" id="1.10.10.10:FF:000009">
    <property type="entry name" value="LexA repressor"/>
    <property type="match status" value="1"/>
</dbReference>
<dbReference type="FunFam" id="2.10.109.10:FF:000001">
    <property type="entry name" value="LexA repressor"/>
    <property type="match status" value="1"/>
</dbReference>
<dbReference type="Gene3D" id="2.10.109.10">
    <property type="entry name" value="Umud Fragment, subunit A"/>
    <property type="match status" value="1"/>
</dbReference>
<dbReference type="Gene3D" id="1.10.10.10">
    <property type="entry name" value="Winged helix-like DNA-binding domain superfamily/Winged helix DNA-binding domain"/>
    <property type="match status" value="1"/>
</dbReference>
<dbReference type="HAMAP" id="MF_00015">
    <property type="entry name" value="LexA"/>
    <property type="match status" value="1"/>
</dbReference>
<dbReference type="InterPro" id="IPR006200">
    <property type="entry name" value="LexA"/>
</dbReference>
<dbReference type="InterPro" id="IPR039418">
    <property type="entry name" value="LexA-like"/>
</dbReference>
<dbReference type="InterPro" id="IPR036286">
    <property type="entry name" value="LexA/Signal_pep-like_sf"/>
</dbReference>
<dbReference type="InterPro" id="IPR006199">
    <property type="entry name" value="LexA_DNA-bd_dom"/>
</dbReference>
<dbReference type="InterPro" id="IPR050077">
    <property type="entry name" value="LexA_repressor"/>
</dbReference>
<dbReference type="InterPro" id="IPR006197">
    <property type="entry name" value="Peptidase_S24_LexA"/>
</dbReference>
<dbReference type="InterPro" id="IPR015927">
    <property type="entry name" value="Peptidase_S24_S26A/B/C"/>
</dbReference>
<dbReference type="InterPro" id="IPR036388">
    <property type="entry name" value="WH-like_DNA-bd_sf"/>
</dbReference>
<dbReference type="InterPro" id="IPR036390">
    <property type="entry name" value="WH_DNA-bd_sf"/>
</dbReference>
<dbReference type="NCBIfam" id="TIGR00498">
    <property type="entry name" value="lexA"/>
    <property type="match status" value="1"/>
</dbReference>
<dbReference type="PANTHER" id="PTHR33516">
    <property type="entry name" value="LEXA REPRESSOR"/>
    <property type="match status" value="1"/>
</dbReference>
<dbReference type="PANTHER" id="PTHR33516:SF2">
    <property type="entry name" value="LEXA REPRESSOR-RELATED"/>
    <property type="match status" value="1"/>
</dbReference>
<dbReference type="Pfam" id="PF01726">
    <property type="entry name" value="LexA_DNA_bind"/>
    <property type="match status" value="1"/>
</dbReference>
<dbReference type="Pfam" id="PF00717">
    <property type="entry name" value="Peptidase_S24"/>
    <property type="match status" value="1"/>
</dbReference>
<dbReference type="PRINTS" id="PR00726">
    <property type="entry name" value="LEXASERPTASE"/>
</dbReference>
<dbReference type="SUPFAM" id="SSF51306">
    <property type="entry name" value="LexA/Signal peptidase"/>
    <property type="match status" value="1"/>
</dbReference>
<dbReference type="SUPFAM" id="SSF46785">
    <property type="entry name" value="Winged helix' DNA-binding domain"/>
    <property type="match status" value="1"/>
</dbReference>
<organism>
    <name type="scientific">Salmonella paratyphi A (strain ATCC 9150 / SARB42)</name>
    <dbReference type="NCBI Taxonomy" id="295319"/>
    <lineage>
        <taxon>Bacteria</taxon>
        <taxon>Pseudomonadati</taxon>
        <taxon>Pseudomonadota</taxon>
        <taxon>Gammaproteobacteria</taxon>
        <taxon>Enterobacterales</taxon>
        <taxon>Enterobacteriaceae</taxon>
        <taxon>Salmonella</taxon>
    </lineage>
</organism>
<feature type="chain" id="PRO_0000170081" description="LexA repressor">
    <location>
        <begin position="1"/>
        <end position="202"/>
    </location>
</feature>
<feature type="DNA-binding region" description="H-T-H motif" evidence="1">
    <location>
        <begin position="28"/>
        <end position="48"/>
    </location>
</feature>
<feature type="active site" description="For autocatalytic cleavage activity" evidence="1">
    <location>
        <position position="119"/>
    </location>
</feature>
<feature type="active site" description="For autocatalytic cleavage activity" evidence="1">
    <location>
        <position position="156"/>
    </location>
</feature>
<feature type="site" description="Cleavage; by autolysis" evidence="1">
    <location>
        <begin position="84"/>
        <end position="85"/>
    </location>
</feature>
<reference key="1">
    <citation type="journal article" date="2004" name="Nat. Genet.">
        <title>Comparison of genome degradation in Paratyphi A and Typhi, human-restricted serovars of Salmonella enterica that cause typhoid.</title>
        <authorList>
            <person name="McClelland M."/>
            <person name="Sanderson K.E."/>
            <person name="Clifton S.W."/>
            <person name="Latreille P."/>
            <person name="Porwollik S."/>
            <person name="Sabo A."/>
            <person name="Meyer R."/>
            <person name="Bieri T."/>
            <person name="Ozersky P."/>
            <person name="McLellan M."/>
            <person name="Harkins C.R."/>
            <person name="Wang C."/>
            <person name="Nguyen C."/>
            <person name="Berghoff A."/>
            <person name="Elliott G."/>
            <person name="Kohlberg S."/>
            <person name="Strong C."/>
            <person name="Du F."/>
            <person name="Carter J."/>
            <person name="Kremizki C."/>
            <person name="Layman D."/>
            <person name="Leonard S."/>
            <person name="Sun H."/>
            <person name="Fulton L."/>
            <person name="Nash W."/>
            <person name="Miner T."/>
            <person name="Minx P."/>
            <person name="Delehaunty K."/>
            <person name="Fronick C."/>
            <person name="Magrini V."/>
            <person name="Nhan M."/>
            <person name="Warren W."/>
            <person name="Florea L."/>
            <person name="Spieth J."/>
            <person name="Wilson R.K."/>
        </authorList>
    </citation>
    <scope>NUCLEOTIDE SEQUENCE [LARGE SCALE GENOMIC DNA]</scope>
    <source>
        <strain>ATCC 9150 / SARB42</strain>
    </source>
</reference>
<protein>
    <recommendedName>
        <fullName evidence="1">LexA repressor</fullName>
        <ecNumber evidence="1">3.4.21.88</ecNumber>
    </recommendedName>
</protein>
<accession>Q5PL14</accession>
<sequence>MKALTARQQEVFDLIRDHISQTGMPPTRAEIAQRLGFRSPNAAEEHLKALARKGVLEIVSGASRGIRLLQEEEDGLPLVGRVAAGEPLLAQQHIEGHYQVDPSLFKPSADFLLRVSGMSMKDIGIMDGDLLAVHKTQDVRNGQVVVARIDDEVTVKRLKKQGNKVELLPENSEFTPIVVDLREQSFTIEGLAVGVIRNGEWL</sequence>
<keyword id="KW-0068">Autocatalytic cleavage</keyword>
<keyword id="KW-0227">DNA damage</keyword>
<keyword id="KW-0234">DNA repair</keyword>
<keyword id="KW-0235">DNA replication</keyword>
<keyword id="KW-0238">DNA-binding</keyword>
<keyword id="KW-0378">Hydrolase</keyword>
<keyword id="KW-0678">Repressor</keyword>
<keyword id="KW-0742">SOS response</keyword>
<keyword id="KW-0804">Transcription</keyword>
<keyword id="KW-0805">Transcription regulation</keyword>